<evidence type="ECO:0000250" key="1"/>
<evidence type="ECO:0000305" key="2"/>
<accession>P60760</accession>
<accession>A0A1R3Y0C6</accession>
<accession>O33256</accession>
<accession>X2BK72</accession>
<name>HIS1_MYCBO</name>
<sequence>MLRVAVPNKGALSEPATEILAEAGYRRRTDSKDLTVIDPVNNVEFFFLRPKDIAIYVGSGELDFGITGRDLVCDSGAQVRERLALGFGSSSFRYAAPAGRNWTTADLAGMRIATAYPNLVRKDLATKGIEATVIRLDGAVEISVQLGVADAIADVVGSGRTLSQHDLVAFGEPLCDSEAVLIERAGTDGQDQTEARDQLVARVQGVVFGQQYLMLDYDCPRSALKKATAITPGLESPTIAPLADPDWVAIRALVPRRDVNGIMDELAAIGAKAILASDIRFCRF</sequence>
<organism>
    <name type="scientific">Mycobacterium bovis (strain ATCC BAA-935 / AF2122/97)</name>
    <dbReference type="NCBI Taxonomy" id="233413"/>
    <lineage>
        <taxon>Bacteria</taxon>
        <taxon>Bacillati</taxon>
        <taxon>Actinomycetota</taxon>
        <taxon>Actinomycetes</taxon>
        <taxon>Mycobacteriales</taxon>
        <taxon>Mycobacteriaceae</taxon>
        <taxon>Mycobacterium</taxon>
        <taxon>Mycobacterium tuberculosis complex</taxon>
    </lineage>
</organism>
<proteinExistence type="inferred from homology"/>
<reference key="1">
    <citation type="journal article" date="2003" name="Proc. Natl. Acad. Sci. U.S.A.">
        <title>The complete genome sequence of Mycobacterium bovis.</title>
        <authorList>
            <person name="Garnier T."/>
            <person name="Eiglmeier K."/>
            <person name="Camus J.-C."/>
            <person name="Medina N."/>
            <person name="Mansoor H."/>
            <person name="Pryor M."/>
            <person name="Duthoy S."/>
            <person name="Grondin S."/>
            <person name="Lacroix C."/>
            <person name="Monsempe C."/>
            <person name="Simon S."/>
            <person name="Harris B."/>
            <person name="Atkin R."/>
            <person name="Doggett J."/>
            <person name="Mayes R."/>
            <person name="Keating L."/>
            <person name="Wheeler P.R."/>
            <person name="Parkhill J."/>
            <person name="Barrell B.G."/>
            <person name="Cole S.T."/>
            <person name="Gordon S.V."/>
            <person name="Hewinson R.G."/>
        </authorList>
    </citation>
    <scope>NUCLEOTIDE SEQUENCE [LARGE SCALE GENOMIC DNA]</scope>
    <source>
        <strain>ATCC BAA-935 / AF2122/97</strain>
    </source>
</reference>
<reference key="2">
    <citation type="journal article" date="2017" name="Genome Announc.">
        <title>Updated reference genome sequence and annotation of Mycobacterium bovis AF2122/97.</title>
        <authorList>
            <person name="Malone K.M."/>
            <person name="Farrell D."/>
            <person name="Stuber T.P."/>
            <person name="Schubert O.T."/>
            <person name="Aebersold R."/>
            <person name="Robbe-Austerman S."/>
            <person name="Gordon S.V."/>
        </authorList>
    </citation>
    <scope>NUCLEOTIDE SEQUENCE [LARGE SCALE GENOMIC DNA]</scope>
    <scope>GENOME REANNOTATION</scope>
    <source>
        <strain>ATCC BAA-935 / AF2122/97</strain>
    </source>
</reference>
<dbReference type="EC" id="2.4.2.17"/>
<dbReference type="EMBL" id="LT708304">
    <property type="protein sequence ID" value="SIU00752.1"/>
    <property type="molecule type" value="Genomic_DNA"/>
</dbReference>
<dbReference type="RefSeq" id="NP_855794.1">
    <property type="nucleotide sequence ID" value="NC_002945.3"/>
</dbReference>
<dbReference type="RefSeq" id="WP_003411047.1">
    <property type="nucleotide sequence ID" value="NC_002945.4"/>
</dbReference>
<dbReference type="SMR" id="P60760"/>
<dbReference type="GeneID" id="45426096"/>
<dbReference type="KEGG" id="mbo:BQ2027_MB2145C"/>
<dbReference type="PATRIC" id="fig|233413.5.peg.2358"/>
<dbReference type="UniPathway" id="UPA00031">
    <property type="reaction ID" value="UER00006"/>
</dbReference>
<dbReference type="Proteomes" id="UP000001419">
    <property type="component" value="Chromosome"/>
</dbReference>
<dbReference type="GO" id="GO:0005737">
    <property type="term" value="C:cytoplasm"/>
    <property type="evidence" value="ECO:0007669"/>
    <property type="project" value="UniProtKB-SubCell"/>
</dbReference>
<dbReference type="GO" id="GO:0005524">
    <property type="term" value="F:ATP binding"/>
    <property type="evidence" value="ECO:0007669"/>
    <property type="project" value="UniProtKB-KW"/>
</dbReference>
<dbReference type="GO" id="GO:0003879">
    <property type="term" value="F:ATP phosphoribosyltransferase activity"/>
    <property type="evidence" value="ECO:0007669"/>
    <property type="project" value="UniProtKB-UniRule"/>
</dbReference>
<dbReference type="GO" id="GO:0000287">
    <property type="term" value="F:magnesium ion binding"/>
    <property type="evidence" value="ECO:0007669"/>
    <property type="project" value="UniProtKB-UniRule"/>
</dbReference>
<dbReference type="GO" id="GO:0000105">
    <property type="term" value="P:L-histidine biosynthetic process"/>
    <property type="evidence" value="ECO:0007669"/>
    <property type="project" value="UniProtKB-UniRule"/>
</dbReference>
<dbReference type="CDD" id="cd13591">
    <property type="entry name" value="PBP2_HisGL1"/>
    <property type="match status" value="1"/>
</dbReference>
<dbReference type="FunFam" id="3.30.70.120:FF:000003">
    <property type="entry name" value="ATP phosphoribosyltransferase"/>
    <property type="match status" value="1"/>
</dbReference>
<dbReference type="FunFam" id="3.40.190.10:FF:000115">
    <property type="entry name" value="ATP phosphoribosyltransferase"/>
    <property type="match status" value="1"/>
</dbReference>
<dbReference type="Gene3D" id="3.30.70.120">
    <property type="match status" value="1"/>
</dbReference>
<dbReference type="Gene3D" id="3.40.190.10">
    <property type="entry name" value="Periplasmic binding protein-like II"/>
    <property type="match status" value="2"/>
</dbReference>
<dbReference type="HAMAP" id="MF_00079">
    <property type="entry name" value="HisG_Long"/>
    <property type="match status" value="1"/>
</dbReference>
<dbReference type="InterPro" id="IPR020621">
    <property type="entry name" value="ATP-PRT_HisG_long"/>
</dbReference>
<dbReference type="InterPro" id="IPR013820">
    <property type="entry name" value="ATP_PRibTrfase_cat"/>
</dbReference>
<dbReference type="InterPro" id="IPR018198">
    <property type="entry name" value="ATP_PRibTrfase_CS"/>
</dbReference>
<dbReference type="InterPro" id="IPR001348">
    <property type="entry name" value="ATP_PRibTrfase_HisG"/>
</dbReference>
<dbReference type="InterPro" id="IPR013115">
    <property type="entry name" value="HisG_C"/>
</dbReference>
<dbReference type="InterPro" id="IPR011322">
    <property type="entry name" value="N-reg_PII-like_a/b"/>
</dbReference>
<dbReference type="InterPro" id="IPR015867">
    <property type="entry name" value="N-reg_PII/ATP_PRibTrfase_C"/>
</dbReference>
<dbReference type="NCBIfam" id="TIGR00070">
    <property type="entry name" value="hisG"/>
    <property type="match status" value="1"/>
</dbReference>
<dbReference type="NCBIfam" id="TIGR03455">
    <property type="entry name" value="HisG_C-term"/>
    <property type="match status" value="1"/>
</dbReference>
<dbReference type="PANTHER" id="PTHR21403:SF8">
    <property type="entry name" value="ATP PHOSPHORIBOSYLTRANSFERASE"/>
    <property type="match status" value="1"/>
</dbReference>
<dbReference type="PANTHER" id="PTHR21403">
    <property type="entry name" value="ATP PHOSPHORIBOSYLTRANSFERASE ATP-PRTASE"/>
    <property type="match status" value="1"/>
</dbReference>
<dbReference type="Pfam" id="PF01634">
    <property type="entry name" value="HisG"/>
    <property type="match status" value="1"/>
</dbReference>
<dbReference type="Pfam" id="PF08029">
    <property type="entry name" value="HisG_C"/>
    <property type="match status" value="1"/>
</dbReference>
<dbReference type="SUPFAM" id="SSF54913">
    <property type="entry name" value="GlnB-like"/>
    <property type="match status" value="1"/>
</dbReference>
<dbReference type="SUPFAM" id="SSF53850">
    <property type="entry name" value="Periplasmic binding protein-like II"/>
    <property type="match status" value="1"/>
</dbReference>
<dbReference type="PROSITE" id="PS01316">
    <property type="entry name" value="ATP_P_PHORIBOSYLTR"/>
    <property type="match status" value="1"/>
</dbReference>
<feature type="chain" id="PRO_0000151854" description="ATP phosphoribosyltransferase">
    <location>
        <begin position="1"/>
        <end position="284"/>
    </location>
</feature>
<protein>
    <recommendedName>
        <fullName>ATP phosphoribosyltransferase</fullName>
        <shortName>ATP-PRT</shortName>
        <shortName>ATP-PRTase</shortName>
        <ecNumber>2.4.2.17</ecNumber>
    </recommendedName>
</protein>
<keyword id="KW-0028">Amino-acid biosynthesis</keyword>
<keyword id="KW-0067">ATP-binding</keyword>
<keyword id="KW-0963">Cytoplasm</keyword>
<keyword id="KW-0328">Glycosyltransferase</keyword>
<keyword id="KW-0368">Histidine biosynthesis</keyword>
<keyword id="KW-0460">Magnesium</keyword>
<keyword id="KW-0479">Metal-binding</keyword>
<keyword id="KW-0547">Nucleotide-binding</keyword>
<keyword id="KW-1185">Reference proteome</keyword>
<keyword id="KW-0808">Transferase</keyword>
<comment type="function">
    <text evidence="1">Catalyzes the condensation of ATP and 5-phosphoribose 1-diphosphate to form N'-(5'-phosphoribosyl)-ATP (PR-ATP). Has a crucial role in the pathway because the rate of histidine biosynthesis seems to be controlled primarily by regulation of HisG enzymatic activity (By similarity).</text>
</comment>
<comment type="catalytic activity">
    <reaction>
        <text>1-(5-phospho-beta-D-ribosyl)-ATP + diphosphate = 5-phospho-alpha-D-ribose 1-diphosphate + ATP</text>
        <dbReference type="Rhea" id="RHEA:18473"/>
        <dbReference type="ChEBI" id="CHEBI:30616"/>
        <dbReference type="ChEBI" id="CHEBI:33019"/>
        <dbReference type="ChEBI" id="CHEBI:58017"/>
        <dbReference type="ChEBI" id="CHEBI:73183"/>
        <dbReference type="EC" id="2.4.2.17"/>
    </reaction>
</comment>
<comment type="cofactor">
    <cofactor evidence="1">
        <name>Mg(2+)</name>
        <dbReference type="ChEBI" id="CHEBI:18420"/>
    </cofactor>
</comment>
<comment type="activity regulation">
    <text evidence="1">Feedback inhibited by histidine.</text>
</comment>
<comment type="pathway">
    <text>Amino-acid biosynthesis; L-histidine biosynthesis; L-histidine from 5-phospho-alpha-D-ribose 1-diphosphate: step 1/9.</text>
</comment>
<comment type="subunit">
    <text evidence="1">Equilibrium between an active dimeric form, an inactive hexameric form and higher aggregates. Interconversion between the various forms is largely reversible and is influenced by the natural substrates and inhibitors of the enzyme (By similarity).</text>
</comment>
<comment type="subcellular location">
    <subcellularLocation>
        <location evidence="1">Cytoplasm</location>
    </subcellularLocation>
</comment>
<comment type="similarity">
    <text evidence="2">Belongs to the ATP phosphoribosyltransferase family. Long subfamily.</text>
</comment>
<gene>
    <name type="primary">hisG</name>
    <name type="ordered locus">BQ2027_MB2145C</name>
</gene>